<comment type="function">
    <text evidence="1">Catalyzes the reduction of the glycolytic intermediate dihydroxyacetone phosphate (DHAP) to sn-glycerol 3-phosphate (G3P), the key precursor for phospholipid synthesis.</text>
</comment>
<comment type="catalytic activity">
    <reaction evidence="1">
        <text>sn-glycerol 3-phosphate + NAD(+) = dihydroxyacetone phosphate + NADH + H(+)</text>
        <dbReference type="Rhea" id="RHEA:11092"/>
        <dbReference type="ChEBI" id="CHEBI:15378"/>
        <dbReference type="ChEBI" id="CHEBI:57540"/>
        <dbReference type="ChEBI" id="CHEBI:57597"/>
        <dbReference type="ChEBI" id="CHEBI:57642"/>
        <dbReference type="ChEBI" id="CHEBI:57945"/>
        <dbReference type="EC" id="1.1.1.94"/>
    </reaction>
    <physiologicalReaction direction="right-to-left" evidence="1">
        <dbReference type="Rhea" id="RHEA:11094"/>
    </physiologicalReaction>
</comment>
<comment type="catalytic activity">
    <reaction evidence="1">
        <text>sn-glycerol 3-phosphate + NADP(+) = dihydroxyacetone phosphate + NADPH + H(+)</text>
        <dbReference type="Rhea" id="RHEA:11096"/>
        <dbReference type="ChEBI" id="CHEBI:15378"/>
        <dbReference type="ChEBI" id="CHEBI:57597"/>
        <dbReference type="ChEBI" id="CHEBI:57642"/>
        <dbReference type="ChEBI" id="CHEBI:57783"/>
        <dbReference type="ChEBI" id="CHEBI:58349"/>
        <dbReference type="EC" id="1.1.1.94"/>
    </reaction>
    <physiologicalReaction direction="right-to-left" evidence="1">
        <dbReference type="Rhea" id="RHEA:11098"/>
    </physiologicalReaction>
</comment>
<comment type="pathway">
    <text evidence="1">Membrane lipid metabolism; glycerophospholipid metabolism.</text>
</comment>
<comment type="subcellular location">
    <subcellularLocation>
        <location evidence="1">Cytoplasm</location>
    </subcellularLocation>
</comment>
<comment type="similarity">
    <text evidence="1">Belongs to the NAD-dependent glycerol-3-phosphate dehydrogenase family.</text>
</comment>
<name>GPDA_COXBN</name>
<dbReference type="EC" id="1.1.1.94" evidence="1"/>
<dbReference type="EMBL" id="CP000733">
    <property type="protein sequence ID" value="ABS77679.1"/>
    <property type="molecule type" value="Genomic_DNA"/>
</dbReference>
<dbReference type="RefSeq" id="WP_010958277.1">
    <property type="nucleotide sequence ID" value="NC_009727.1"/>
</dbReference>
<dbReference type="SMR" id="A9KF85"/>
<dbReference type="KEGG" id="cbd:CBUD_0466"/>
<dbReference type="HOGENOM" id="CLU_033449_0_2_6"/>
<dbReference type="UniPathway" id="UPA00940"/>
<dbReference type="Proteomes" id="UP000008555">
    <property type="component" value="Chromosome"/>
</dbReference>
<dbReference type="GO" id="GO:0005829">
    <property type="term" value="C:cytosol"/>
    <property type="evidence" value="ECO:0007669"/>
    <property type="project" value="TreeGrafter"/>
</dbReference>
<dbReference type="GO" id="GO:0047952">
    <property type="term" value="F:glycerol-3-phosphate dehydrogenase [NAD(P)+] activity"/>
    <property type="evidence" value="ECO:0007669"/>
    <property type="project" value="UniProtKB-UniRule"/>
</dbReference>
<dbReference type="GO" id="GO:0051287">
    <property type="term" value="F:NAD binding"/>
    <property type="evidence" value="ECO:0007669"/>
    <property type="project" value="InterPro"/>
</dbReference>
<dbReference type="GO" id="GO:0005975">
    <property type="term" value="P:carbohydrate metabolic process"/>
    <property type="evidence" value="ECO:0007669"/>
    <property type="project" value="InterPro"/>
</dbReference>
<dbReference type="GO" id="GO:0046167">
    <property type="term" value="P:glycerol-3-phosphate biosynthetic process"/>
    <property type="evidence" value="ECO:0007669"/>
    <property type="project" value="UniProtKB-UniRule"/>
</dbReference>
<dbReference type="GO" id="GO:0046168">
    <property type="term" value="P:glycerol-3-phosphate catabolic process"/>
    <property type="evidence" value="ECO:0007669"/>
    <property type="project" value="InterPro"/>
</dbReference>
<dbReference type="GO" id="GO:0046474">
    <property type="term" value="P:glycerophospholipid biosynthetic process"/>
    <property type="evidence" value="ECO:0007669"/>
    <property type="project" value="TreeGrafter"/>
</dbReference>
<dbReference type="FunFam" id="1.10.1040.10:FF:000001">
    <property type="entry name" value="Glycerol-3-phosphate dehydrogenase [NAD(P)+]"/>
    <property type="match status" value="1"/>
</dbReference>
<dbReference type="FunFam" id="3.40.50.720:FF:000019">
    <property type="entry name" value="Glycerol-3-phosphate dehydrogenase [NAD(P)+]"/>
    <property type="match status" value="1"/>
</dbReference>
<dbReference type="Gene3D" id="1.10.1040.10">
    <property type="entry name" value="N-(1-d-carboxylethyl)-l-norvaline Dehydrogenase, domain 2"/>
    <property type="match status" value="1"/>
</dbReference>
<dbReference type="Gene3D" id="3.40.50.720">
    <property type="entry name" value="NAD(P)-binding Rossmann-like Domain"/>
    <property type="match status" value="1"/>
</dbReference>
<dbReference type="HAMAP" id="MF_00394">
    <property type="entry name" value="NAD_Glyc3P_dehydrog"/>
    <property type="match status" value="1"/>
</dbReference>
<dbReference type="InterPro" id="IPR008927">
    <property type="entry name" value="6-PGluconate_DH-like_C_sf"/>
</dbReference>
<dbReference type="InterPro" id="IPR013328">
    <property type="entry name" value="6PGD_dom2"/>
</dbReference>
<dbReference type="InterPro" id="IPR006168">
    <property type="entry name" value="G3P_DH_NAD-dep"/>
</dbReference>
<dbReference type="InterPro" id="IPR006109">
    <property type="entry name" value="G3P_DH_NAD-dep_C"/>
</dbReference>
<dbReference type="InterPro" id="IPR011128">
    <property type="entry name" value="G3P_DH_NAD-dep_N"/>
</dbReference>
<dbReference type="InterPro" id="IPR036291">
    <property type="entry name" value="NAD(P)-bd_dom_sf"/>
</dbReference>
<dbReference type="NCBIfam" id="NF000940">
    <property type="entry name" value="PRK00094.1-2"/>
    <property type="match status" value="1"/>
</dbReference>
<dbReference type="NCBIfam" id="NF000942">
    <property type="entry name" value="PRK00094.1-4"/>
    <property type="match status" value="1"/>
</dbReference>
<dbReference type="PANTHER" id="PTHR11728">
    <property type="entry name" value="GLYCEROL-3-PHOSPHATE DEHYDROGENASE"/>
    <property type="match status" value="1"/>
</dbReference>
<dbReference type="PANTHER" id="PTHR11728:SF1">
    <property type="entry name" value="GLYCEROL-3-PHOSPHATE DEHYDROGENASE [NAD(+)] 2, CHLOROPLASTIC"/>
    <property type="match status" value="1"/>
</dbReference>
<dbReference type="Pfam" id="PF07479">
    <property type="entry name" value="NAD_Gly3P_dh_C"/>
    <property type="match status" value="1"/>
</dbReference>
<dbReference type="Pfam" id="PF01210">
    <property type="entry name" value="NAD_Gly3P_dh_N"/>
    <property type="match status" value="1"/>
</dbReference>
<dbReference type="PIRSF" id="PIRSF000114">
    <property type="entry name" value="Glycerol-3-P_dh"/>
    <property type="match status" value="1"/>
</dbReference>
<dbReference type="PRINTS" id="PR00077">
    <property type="entry name" value="GPDHDRGNASE"/>
</dbReference>
<dbReference type="SUPFAM" id="SSF48179">
    <property type="entry name" value="6-phosphogluconate dehydrogenase C-terminal domain-like"/>
    <property type="match status" value="1"/>
</dbReference>
<dbReference type="SUPFAM" id="SSF51735">
    <property type="entry name" value="NAD(P)-binding Rossmann-fold domains"/>
    <property type="match status" value="1"/>
</dbReference>
<dbReference type="PROSITE" id="PS00957">
    <property type="entry name" value="NAD_G3PDH"/>
    <property type="match status" value="1"/>
</dbReference>
<feature type="chain" id="PRO_1000080304" description="Glycerol-3-phosphate dehydrogenase [NAD(P)+]">
    <location>
        <begin position="1"/>
        <end position="332"/>
    </location>
</feature>
<feature type="active site" description="Proton acceptor" evidence="1">
    <location>
        <position position="192"/>
    </location>
</feature>
<feature type="binding site" evidence="1">
    <location>
        <position position="15"/>
    </location>
    <ligand>
        <name>NADPH</name>
        <dbReference type="ChEBI" id="CHEBI:57783"/>
    </ligand>
</feature>
<feature type="binding site" evidence="1">
    <location>
        <position position="16"/>
    </location>
    <ligand>
        <name>NADPH</name>
        <dbReference type="ChEBI" id="CHEBI:57783"/>
    </ligand>
</feature>
<feature type="binding site" evidence="1">
    <location>
        <position position="110"/>
    </location>
    <ligand>
        <name>NADPH</name>
        <dbReference type="ChEBI" id="CHEBI:57783"/>
    </ligand>
</feature>
<feature type="binding site" evidence="1">
    <location>
        <position position="110"/>
    </location>
    <ligand>
        <name>sn-glycerol 3-phosphate</name>
        <dbReference type="ChEBI" id="CHEBI:57597"/>
    </ligand>
</feature>
<feature type="binding site" evidence="1">
    <location>
        <position position="137"/>
    </location>
    <ligand>
        <name>sn-glycerol 3-phosphate</name>
        <dbReference type="ChEBI" id="CHEBI:57597"/>
    </ligand>
</feature>
<feature type="binding site" evidence="1">
    <location>
        <position position="139"/>
    </location>
    <ligand>
        <name>sn-glycerol 3-phosphate</name>
        <dbReference type="ChEBI" id="CHEBI:57597"/>
    </ligand>
</feature>
<feature type="binding site" evidence="1">
    <location>
        <position position="141"/>
    </location>
    <ligand>
        <name>NADPH</name>
        <dbReference type="ChEBI" id="CHEBI:57783"/>
    </ligand>
</feature>
<feature type="binding site" evidence="1">
    <location>
        <position position="192"/>
    </location>
    <ligand>
        <name>sn-glycerol 3-phosphate</name>
        <dbReference type="ChEBI" id="CHEBI:57597"/>
    </ligand>
</feature>
<feature type="binding site" evidence="1">
    <location>
        <position position="245"/>
    </location>
    <ligand>
        <name>sn-glycerol 3-phosphate</name>
        <dbReference type="ChEBI" id="CHEBI:57597"/>
    </ligand>
</feature>
<feature type="binding site" evidence="1">
    <location>
        <position position="255"/>
    </location>
    <ligand>
        <name>sn-glycerol 3-phosphate</name>
        <dbReference type="ChEBI" id="CHEBI:57597"/>
    </ligand>
</feature>
<feature type="binding site" evidence="1">
    <location>
        <position position="256"/>
    </location>
    <ligand>
        <name>NADPH</name>
        <dbReference type="ChEBI" id="CHEBI:57783"/>
    </ligand>
</feature>
<feature type="binding site" evidence="1">
    <location>
        <position position="256"/>
    </location>
    <ligand>
        <name>sn-glycerol 3-phosphate</name>
        <dbReference type="ChEBI" id="CHEBI:57597"/>
    </ligand>
</feature>
<feature type="binding site" evidence="1">
    <location>
        <position position="257"/>
    </location>
    <ligand>
        <name>sn-glycerol 3-phosphate</name>
        <dbReference type="ChEBI" id="CHEBI:57597"/>
    </ligand>
</feature>
<feature type="binding site" evidence="1">
    <location>
        <position position="282"/>
    </location>
    <ligand>
        <name>NADPH</name>
        <dbReference type="ChEBI" id="CHEBI:57783"/>
    </ligand>
</feature>
<gene>
    <name evidence="1" type="primary">gpsA</name>
    <name type="ordered locus">CBUD_0466</name>
</gene>
<evidence type="ECO:0000255" key="1">
    <source>
        <dbReference type="HAMAP-Rule" id="MF_00394"/>
    </source>
</evidence>
<sequence>MEPFKHPIAILGAGSWGTALALVLARKGQKVRLWSYESDHVDEMQAEGVNNRYLPNYPFPETLKAYCDLKASLEGVTDILIVVPSFAFHEVITRMKPLIDAKTRIAWGTKGLAKGSRLLHEVVATELGQVPMAVISGPSLATEVAANLPTAVSLASNNSQFSKDLIERLHGQRFRVYKNDDMIGVELCGSVKNILAIATGISDGLKLGSNARAALITRGLTEMGRLVSVFGGKQETLTGLAGLGDLVLTCTDNQSRNRRFGLALGEGVDKKEAQQAIGQAIEGLYNTDQVHALAQKHAIEMPLTFQVHRILHEDLDPQQAVQELLERSPKAE</sequence>
<keyword id="KW-0963">Cytoplasm</keyword>
<keyword id="KW-0444">Lipid biosynthesis</keyword>
<keyword id="KW-0443">Lipid metabolism</keyword>
<keyword id="KW-0520">NAD</keyword>
<keyword id="KW-0521">NADP</keyword>
<keyword id="KW-0547">Nucleotide-binding</keyword>
<keyword id="KW-0560">Oxidoreductase</keyword>
<keyword id="KW-0594">Phospholipid biosynthesis</keyword>
<keyword id="KW-1208">Phospholipid metabolism</keyword>
<protein>
    <recommendedName>
        <fullName evidence="1">Glycerol-3-phosphate dehydrogenase [NAD(P)+]</fullName>
        <ecNumber evidence="1">1.1.1.94</ecNumber>
    </recommendedName>
    <alternativeName>
        <fullName evidence="1">NAD(P)(+)-dependent glycerol-3-phosphate dehydrogenase</fullName>
    </alternativeName>
    <alternativeName>
        <fullName evidence="1">NAD(P)H-dependent dihydroxyacetone-phosphate reductase</fullName>
    </alternativeName>
</protein>
<organism>
    <name type="scientific">Coxiella burnetii (strain Dugway 5J108-111)</name>
    <dbReference type="NCBI Taxonomy" id="434922"/>
    <lineage>
        <taxon>Bacteria</taxon>
        <taxon>Pseudomonadati</taxon>
        <taxon>Pseudomonadota</taxon>
        <taxon>Gammaproteobacteria</taxon>
        <taxon>Legionellales</taxon>
        <taxon>Coxiellaceae</taxon>
        <taxon>Coxiella</taxon>
    </lineage>
</organism>
<proteinExistence type="inferred from homology"/>
<reference key="1">
    <citation type="journal article" date="2009" name="Infect. Immun.">
        <title>Comparative genomics reveal extensive transposon-mediated genomic plasticity and diversity among potential effector proteins within the genus Coxiella.</title>
        <authorList>
            <person name="Beare P.A."/>
            <person name="Unsworth N."/>
            <person name="Andoh M."/>
            <person name="Voth D.E."/>
            <person name="Omsland A."/>
            <person name="Gilk S.D."/>
            <person name="Williams K.P."/>
            <person name="Sobral B.W."/>
            <person name="Kupko J.J. III"/>
            <person name="Porcella S.F."/>
            <person name="Samuel J.E."/>
            <person name="Heinzen R.A."/>
        </authorList>
    </citation>
    <scope>NUCLEOTIDE SEQUENCE [LARGE SCALE GENOMIC DNA]</scope>
    <source>
        <strain>Dugway 5J108-111</strain>
    </source>
</reference>
<accession>A9KF85</accession>